<proteinExistence type="inferred from homology"/>
<keyword id="KW-0963">Cytoplasm</keyword>
<keyword id="KW-0269">Exonuclease</keyword>
<keyword id="KW-0378">Hydrolase</keyword>
<keyword id="KW-0540">Nuclease</keyword>
<name>EX7S_STAAB</name>
<gene>
    <name evidence="1" type="primary">xseB</name>
    <name type="ordered locus">SAB1395c</name>
</gene>
<feature type="chain" id="PRO_0000303750" description="Exodeoxyribonuclease 7 small subunit">
    <location>
        <begin position="1"/>
        <end position="76"/>
    </location>
</feature>
<reference key="1">
    <citation type="journal article" date="2007" name="PLoS ONE">
        <title>Molecular correlates of host specialization in Staphylococcus aureus.</title>
        <authorList>
            <person name="Herron-Olson L."/>
            <person name="Fitzgerald J.R."/>
            <person name="Musser J.M."/>
            <person name="Kapur V."/>
        </authorList>
    </citation>
    <scope>NUCLEOTIDE SEQUENCE [LARGE SCALE GENOMIC DNA]</scope>
    <source>
        <strain>bovine RF122 / ET3-1</strain>
    </source>
</reference>
<sequence length="76" mass="8760">MTKETQSFEEMMQELEQIVQKLDNETVSLEESLDLYQRGMKLSAACDTTLKNAEKKVNDLIKEEAEDVKNDESTDE</sequence>
<evidence type="ECO:0000255" key="1">
    <source>
        <dbReference type="HAMAP-Rule" id="MF_00337"/>
    </source>
</evidence>
<protein>
    <recommendedName>
        <fullName evidence="1">Exodeoxyribonuclease 7 small subunit</fullName>
        <ecNumber evidence="1">3.1.11.6</ecNumber>
    </recommendedName>
    <alternativeName>
        <fullName evidence="1">Exodeoxyribonuclease VII small subunit</fullName>
        <shortName evidence="1">Exonuclease VII small subunit</shortName>
    </alternativeName>
</protein>
<accession>Q2YYB9</accession>
<dbReference type="EC" id="3.1.11.6" evidence="1"/>
<dbReference type="EMBL" id="AJ938182">
    <property type="protein sequence ID" value="CAI81084.1"/>
    <property type="molecule type" value="Genomic_DNA"/>
</dbReference>
<dbReference type="RefSeq" id="WP_000159865.1">
    <property type="nucleotide sequence ID" value="NC_007622.1"/>
</dbReference>
<dbReference type="SMR" id="Q2YYB9"/>
<dbReference type="KEGG" id="sab:SAB1395c"/>
<dbReference type="HOGENOM" id="CLU_145918_3_2_9"/>
<dbReference type="GO" id="GO:0005829">
    <property type="term" value="C:cytosol"/>
    <property type="evidence" value="ECO:0007669"/>
    <property type="project" value="TreeGrafter"/>
</dbReference>
<dbReference type="GO" id="GO:0009318">
    <property type="term" value="C:exodeoxyribonuclease VII complex"/>
    <property type="evidence" value="ECO:0007669"/>
    <property type="project" value="InterPro"/>
</dbReference>
<dbReference type="GO" id="GO:0008855">
    <property type="term" value="F:exodeoxyribonuclease VII activity"/>
    <property type="evidence" value="ECO:0007669"/>
    <property type="project" value="UniProtKB-UniRule"/>
</dbReference>
<dbReference type="GO" id="GO:0006308">
    <property type="term" value="P:DNA catabolic process"/>
    <property type="evidence" value="ECO:0007669"/>
    <property type="project" value="UniProtKB-UniRule"/>
</dbReference>
<dbReference type="FunFam" id="1.10.287.1040:FF:000006">
    <property type="entry name" value="Exodeoxyribonuclease 7 small subunit"/>
    <property type="match status" value="1"/>
</dbReference>
<dbReference type="Gene3D" id="1.10.287.1040">
    <property type="entry name" value="Exonuclease VII, small subunit"/>
    <property type="match status" value="1"/>
</dbReference>
<dbReference type="HAMAP" id="MF_00337">
    <property type="entry name" value="Exonuc_7_S"/>
    <property type="match status" value="1"/>
</dbReference>
<dbReference type="InterPro" id="IPR003761">
    <property type="entry name" value="Exonuc_VII_S"/>
</dbReference>
<dbReference type="InterPro" id="IPR037004">
    <property type="entry name" value="Exonuc_VII_ssu_sf"/>
</dbReference>
<dbReference type="NCBIfam" id="NF002140">
    <property type="entry name" value="PRK00977.1-4"/>
    <property type="match status" value="1"/>
</dbReference>
<dbReference type="NCBIfam" id="NF010671">
    <property type="entry name" value="PRK14068.1"/>
    <property type="match status" value="1"/>
</dbReference>
<dbReference type="NCBIfam" id="TIGR01280">
    <property type="entry name" value="xseB"/>
    <property type="match status" value="1"/>
</dbReference>
<dbReference type="PANTHER" id="PTHR34137">
    <property type="entry name" value="EXODEOXYRIBONUCLEASE 7 SMALL SUBUNIT"/>
    <property type="match status" value="1"/>
</dbReference>
<dbReference type="PANTHER" id="PTHR34137:SF1">
    <property type="entry name" value="EXODEOXYRIBONUCLEASE 7 SMALL SUBUNIT"/>
    <property type="match status" value="1"/>
</dbReference>
<dbReference type="Pfam" id="PF02609">
    <property type="entry name" value="Exonuc_VII_S"/>
    <property type="match status" value="1"/>
</dbReference>
<dbReference type="PIRSF" id="PIRSF006488">
    <property type="entry name" value="Exonuc_VII_S"/>
    <property type="match status" value="1"/>
</dbReference>
<dbReference type="SUPFAM" id="SSF116842">
    <property type="entry name" value="XseB-like"/>
    <property type="match status" value="1"/>
</dbReference>
<comment type="function">
    <text evidence="1">Bidirectionally degrades single-stranded DNA into large acid-insoluble oligonucleotides, which are then degraded further into small acid-soluble oligonucleotides.</text>
</comment>
<comment type="catalytic activity">
    <reaction evidence="1">
        <text>Exonucleolytic cleavage in either 5'- to 3'- or 3'- to 5'-direction to yield nucleoside 5'-phosphates.</text>
        <dbReference type="EC" id="3.1.11.6"/>
    </reaction>
</comment>
<comment type="subunit">
    <text evidence="1">Heterooligomer composed of large and small subunits.</text>
</comment>
<comment type="subcellular location">
    <subcellularLocation>
        <location evidence="1">Cytoplasm</location>
    </subcellularLocation>
</comment>
<comment type="similarity">
    <text evidence="1">Belongs to the XseB family.</text>
</comment>
<organism>
    <name type="scientific">Staphylococcus aureus (strain bovine RF122 / ET3-1)</name>
    <dbReference type="NCBI Taxonomy" id="273036"/>
    <lineage>
        <taxon>Bacteria</taxon>
        <taxon>Bacillati</taxon>
        <taxon>Bacillota</taxon>
        <taxon>Bacilli</taxon>
        <taxon>Bacillales</taxon>
        <taxon>Staphylococcaceae</taxon>
        <taxon>Staphylococcus</taxon>
    </lineage>
</organism>